<protein>
    <recommendedName>
        <fullName>Pesticidal crystal protein Cry9Aa</fullName>
    </recommendedName>
    <alternativeName>
        <fullName>130 kDa crystal protein</fullName>
    </alternativeName>
    <alternativeName>
        <fullName>Crystaline entomocidal protoxin</fullName>
    </alternativeName>
    <alternativeName>
        <fullName>Insecticidal delta-endotoxin CryIXA(a)</fullName>
    </alternativeName>
</protein>
<comment type="function">
    <text>Promotes colloidosmotic lysis by binding to the midgut epithelial cells of insects. This protein is toxic to Galleria mellonella.</text>
</comment>
<comment type="developmental stage">
    <text>The crystal protein is produced during sporulation and is accumulated both as an inclusion and as part of the spore coat.</text>
</comment>
<comment type="miscellaneous">
    <text>Toxic segment of the protein is located in the N-terminus.</text>
</comment>
<comment type="similarity">
    <text evidence="2">Belongs to the delta endotoxin family.</text>
</comment>
<name>CR9AA_BACTG</name>
<reference key="1">
    <citation type="journal article" date="1991" name="FEBS Lett.">
        <title>Nucleotide sequence of a novel delta-endotoxin gene cryIg of Bacillus thuringiensis ssp. galleriae.</title>
        <authorList>
            <person name="Smulevitch S.V."/>
            <person name="Osterman A.L."/>
            <person name="Shevelev A.B."/>
            <person name="Kaluger S.V."/>
            <person name="Karasin A.I."/>
            <person name="Kadyrov R.M."/>
            <person name="Zagnitko O.P."/>
            <person name="Chestukhina G.G."/>
            <person name="Stepanov V.M."/>
        </authorList>
    </citation>
    <scope>NUCLEOTIDE SEQUENCE [GENOMIC DNA]</scope>
    <scope>PROTEIN SEQUENCE OF 24-34</scope>
    <source>
        <strain>11-67</strain>
    </source>
</reference>
<reference key="2">
    <citation type="journal article" date="1992" name="J. Gen. Microbiol.">
        <title>Identification of an insecticidal crystal protein from Bacillus thuringiensis DSIR517 with significant sequence differences from previously described toxins.</title>
        <authorList>
            <person name="Gleave A.P."/>
            <person name="Hedges R.J."/>
            <person name="Broadwell A.H."/>
        </authorList>
    </citation>
    <scope>NUCLEOTIDE SEQUENCE [GENOMIC DNA] OF 1-1151</scope>
    <source>
        <strain>DSIR517</strain>
    </source>
</reference>
<sequence length="1156" mass="129727">MNQNKHGIIGASNCGCASDDVAKYPLANNPYSSALNLNSCQNSSILNWINIIGDAAKEAVSIGTTIVSLITAPSLTGLISIVYDLIGKVLGGSSGQSISDLSICDLLSIIDLRVSQSVLNDGIADFNGSVLLYRNYLEALDSWNKNPNSASAEELRTRFRIADSEFDRILTRGSLTNGGSLARQNAQILLLPSFASAAFFHLLLLRDATRYGTNWGLYNATPFINYQSKLVELIELYTDYCVHWYNRGFNELRQRGTSATAWLEFHRYRREMTLMVLDIVASFSSLDITNYPIETDFQLSRVIYTDPIGFVHRSSLRGESWFSFVNRANFSDLENAIPNPRPSWFLNNMIISTGSLTLPVSPSTDRARVWYGSRDRISPANSQFITELISGQHTTATQTILGRNIFRVDSQACNLNDTTYGVNRAVFYHDASEGSQRSVYEGYIRTTGIDNPRVQNINTYLPGENSDIPTPEDYTHILSTTINLTGGLRQVASNRRSSLVMYGWTHKSLARNNTINPDRITQIPLTKVDTRGTGVSYVNDPGFIGGALLQRTDHGSLGVLRVQFPLHLRQQYRIRVRYASTTNIRLSVNGSFGTISQNLPSTMRLGEDLRYGSFAIREFNTSIRPTASPDQIRLTIEPSFIRQEVYVDRIEFIPVNPTREAKEDLEAAKKAVASLFTRTRDGLQVNVKDYQVDQAANLVSCLSDEQYGYDKKMLLEAVRAAKRLSRERNLLQDPDFNTINSTEENGWKASNGVTISEGGPFYKGRAIQLASARENYPTYIYQKVDASELKPYTRYRLDGFVKSSQDLEIDLIHHHKVHLVKNVPDNLVSDTYPDDSCSGINRCQEQQMVNAQLETEHHHPMDCCEAAQTHEFSSYIDTGDLNSSVDQGIWAIFKVRTTDGYATLGNLELVEVGPLSGESLEREQRDNTKWSAELGRKRAETDRVYQDAKQSINHLFVDYQDQQLNPEIGMADIMDAQNLVASISDVYSDAVLQIPGINYEIYTELSNRLQQASYLYTSRNAVQNGDFNNGLDSWNATAGASVQQDGNTHFLVLSHWDAQVSQQFRVQPNCKYVLRVTAEKVGGGDGYVTIRDDAHHTETLTFNACDYDINGTYVTDNTYLTKEVVFHPETQHMWVEVNETEGAFHIDSIEFVETEK</sequence>
<feature type="propeptide" id="PRO_0000006347" description="Removed in mature form" evidence="1">
    <location>
        <begin position="1"/>
        <end position="23"/>
    </location>
</feature>
<feature type="chain" id="PRO_0000006348" description="Pesticidal crystal protein Cry9Aa">
    <location>
        <begin position="24"/>
        <end position="1156"/>
    </location>
</feature>
<organism>
    <name type="scientific">Bacillus thuringiensis subsp. galleriae</name>
    <dbReference type="NCBI Taxonomy" id="29338"/>
    <lineage>
        <taxon>Bacteria</taxon>
        <taxon>Bacillati</taxon>
        <taxon>Bacillota</taxon>
        <taxon>Bacilli</taxon>
        <taxon>Bacillales</taxon>
        <taxon>Bacillaceae</taxon>
        <taxon>Bacillus</taxon>
        <taxon>Bacillus cereus group</taxon>
    </lineage>
</organism>
<keyword id="KW-0903">Direct protein sequencing</keyword>
<keyword id="KW-0749">Sporulation</keyword>
<keyword id="KW-0800">Toxin</keyword>
<keyword id="KW-0843">Virulence</keyword>
<evidence type="ECO:0000269" key="1">
    <source>
    </source>
</evidence>
<evidence type="ECO:0000305" key="2"/>
<dbReference type="EMBL" id="X58120">
    <property type="protein sequence ID" value="CAA41122.1"/>
    <property type="molecule type" value="Genomic_DNA"/>
</dbReference>
<dbReference type="EMBL" id="X58534">
    <property type="protein sequence ID" value="CAA41425.1"/>
    <property type="molecule type" value="Genomic_DNA"/>
</dbReference>
<dbReference type="PIR" id="S19306">
    <property type="entry name" value="S19306"/>
</dbReference>
<dbReference type="SMR" id="Q99031"/>
<dbReference type="GO" id="GO:0005102">
    <property type="term" value="F:signaling receptor binding"/>
    <property type="evidence" value="ECO:0007669"/>
    <property type="project" value="InterPro"/>
</dbReference>
<dbReference type="GO" id="GO:0090729">
    <property type="term" value="F:toxin activity"/>
    <property type="evidence" value="ECO:0007669"/>
    <property type="project" value="UniProtKB-KW"/>
</dbReference>
<dbReference type="GO" id="GO:0030435">
    <property type="term" value="P:sporulation resulting in formation of a cellular spore"/>
    <property type="evidence" value="ECO:0007669"/>
    <property type="project" value="UniProtKB-KW"/>
</dbReference>
<dbReference type="GO" id="GO:0001907">
    <property type="term" value="P:symbiont-mediated killing of host cell"/>
    <property type="evidence" value="ECO:0007669"/>
    <property type="project" value="InterPro"/>
</dbReference>
<dbReference type="CDD" id="cd04085">
    <property type="entry name" value="delta_endotoxin_C"/>
    <property type="match status" value="1"/>
</dbReference>
<dbReference type="Gene3D" id="2.60.120.260">
    <property type="entry name" value="Galactose-binding domain-like"/>
    <property type="match status" value="2"/>
</dbReference>
<dbReference type="Gene3D" id="2.100.10.10">
    <property type="entry name" value="Pesticidal crystal protein, central domain"/>
    <property type="match status" value="1"/>
</dbReference>
<dbReference type="Gene3D" id="1.20.190.10">
    <property type="entry name" value="Pesticidal crystal protein, N-terminal domain"/>
    <property type="match status" value="1"/>
</dbReference>
<dbReference type="InterPro" id="IPR048645">
    <property type="entry name" value="Cry1Ac-like_dom-VII"/>
</dbReference>
<dbReference type="InterPro" id="IPR041587">
    <property type="entry name" value="Cry_V"/>
</dbReference>
<dbReference type="InterPro" id="IPR008979">
    <property type="entry name" value="Galactose-bd-like_sf"/>
</dbReference>
<dbReference type="InterPro" id="IPR038979">
    <property type="entry name" value="Pest_crys"/>
</dbReference>
<dbReference type="InterPro" id="IPR005638">
    <property type="entry name" value="Pest_crys_dom-III"/>
</dbReference>
<dbReference type="InterPro" id="IPR005639">
    <property type="entry name" value="Pest_crys_dom_I"/>
</dbReference>
<dbReference type="InterPro" id="IPR036716">
    <property type="entry name" value="Pest_crys_N_sf"/>
</dbReference>
<dbReference type="InterPro" id="IPR036399">
    <property type="entry name" value="Pest_cryst_cen_dom_sf"/>
</dbReference>
<dbReference type="InterPro" id="IPR001178">
    <property type="entry name" value="Pest_cryst_dom_II"/>
</dbReference>
<dbReference type="PANTHER" id="PTHR37003">
    <property type="entry name" value="ENDOTOXIN_N DOMAIN-CONTAINING PROTEIN-RELATED"/>
    <property type="match status" value="1"/>
</dbReference>
<dbReference type="PANTHER" id="PTHR37003:SF2">
    <property type="entry name" value="PESTICIDAL CRYSTAL PROTEIN N-TERMINAL DOMAIN-CONTAINING PROTEIN"/>
    <property type="match status" value="1"/>
</dbReference>
<dbReference type="Pfam" id="PF17997">
    <property type="entry name" value="Cry1Ac_D5"/>
    <property type="match status" value="1"/>
</dbReference>
<dbReference type="Pfam" id="PF21463">
    <property type="entry name" value="Cry1Ac_dom-VII"/>
    <property type="match status" value="1"/>
</dbReference>
<dbReference type="Pfam" id="PF03944">
    <property type="entry name" value="Endotoxin_C"/>
    <property type="match status" value="1"/>
</dbReference>
<dbReference type="Pfam" id="PF00555">
    <property type="entry name" value="Endotoxin_M"/>
    <property type="match status" value="1"/>
</dbReference>
<dbReference type="Pfam" id="PF03945">
    <property type="entry name" value="Endotoxin_N"/>
    <property type="match status" value="1"/>
</dbReference>
<dbReference type="SUPFAM" id="SSF51096">
    <property type="entry name" value="delta-Endotoxin (insectocide), middle domain"/>
    <property type="match status" value="1"/>
</dbReference>
<dbReference type="SUPFAM" id="SSF56849">
    <property type="entry name" value="delta-Endotoxin (insectocide), N-terminal domain"/>
    <property type="match status" value="1"/>
</dbReference>
<dbReference type="SUPFAM" id="SSF49785">
    <property type="entry name" value="Galactose-binding domain-like"/>
    <property type="match status" value="2"/>
</dbReference>
<accession>Q99031</accession>
<accession>Q03747</accession>
<gene>
    <name type="primary">cry9Aa</name>
    <name type="synonym">cryIG</name>
    <name type="synonym">cryIVA(a)</name>
</gene>
<proteinExistence type="evidence at protein level"/>